<evidence type="ECO:0000255" key="1">
    <source>
        <dbReference type="HAMAP-Rule" id="MF_00505"/>
    </source>
</evidence>
<evidence type="ECO:0000256" key="2">
    <source>
        <dbReference type="SAM" id="MobiDB-lite"/>
    </source>
</evidence>
<gene>
    <name evidence="1" type="primary">htpG</name>
    <name type="ordered locus">RMA_1325</name>
</gene>
<organism>
    <name type="scientific">Rickettsia massiliae (strain Mtu5)</name>
    <dbReference type="NCBI Taxonomy" id="416276"/>
    <lineage>
        <taxon>Bacteria</taxon>
        <taxon>Pseudomonadati</taxon>
        <taxon>Pseudomonadota</taxon>
        <taxon>Alphaproteobacteria</taxon>
        <taxon>Rickettsiales</taxon>
        <taxon>Rickettsiaceae</taxon>
        <taxon>Rickettsieae</taxon>
        <taxon>Rickettsia</taxon>
        <taxon>spotted fever group</taxon>
    </lineage>
</organism>
<feature type="chain" id="PRO_1000127034" description="Chaperone protein HtpG">
    <location>
        <begin position="1"/>
        <end position="623"/>
    </location>
</feature>
<feature type="region of interest" description="A; substrate-binding" evidence="1">
    <location>
        <begin position="1"/>
        <end position="330"/>
    </location>
</feature>
<feature type="region of interest" description="B" evidence="1">
    <location>
        <begin position="331"/>
        <end position="546"/>
    </location>
</feature>
<feature type="region of interest" description="Disordered" evidence="2">
    <location>
        <begin position="477"/>
        <end position="497"/>
    </location>
</feature>
<feature type="region of interest" description="C" evidence="1">
    <location>
        <begin position="547"/>
        <end position="623"/>
    </location>
</feature>
<feature type="compositionally biased region" description="Basic and acidic residues" evidence="2">
    <location>
        <begin position="488"/>
        <end position="497"/>
    </location>
</feature>
<accession>A8F2Y0</accession>
<protein>
    <recommendedName>
        <fullName evidence="1">Chaperone protein HtpG</fullName>
    </recommendedName>
    <alternativeName>
        <fullName evidence="1">Heat shock protein HtpG</fullName>
    </alternativeName>
    <alternativeName>
        <fullName evidence="1">High temperature protein G</fullName>
    </alternativeName>
</protein>
<reference key="1">
    <citation type="journal article" date="2007" name="Genome Res.">
        <title>Lateral gene transfer between obligate intracellular bacteria: evidence from the Rickettsia massiliae genome.</title>
        <authorList>
            <person name="Blanc G."/>
            <person name="Ogata H."/>
            <person name="Robert C."/>
            <person name="Audic S."/>
            <person name="Claverie J.-M."/>
            <person name="Raoult D."/>
        </authorList>
    </citation>
    <scope>NUCLEOTIDE SEQUENCE [LARGE SCALE GENOMIC DNA]</scope>
    <source>
        <strain>Mtu5</strain>
    </source>
</reference>
<dbReference type="EMBL" id="CP000683">
    <property type="protein sequence ID" value="ABV85266.1"/>
    <property type="molecule type" value="Genomic_DNA"/>
</dbReference>
<dbReference type="SMR" id="A8F2Y0"/>
<dbReference type="KEGG" id="rms:RMA_1325"/>
<dbReference type="HOGENOM" id="CLU_006684_3_0_5"/>
<dbReference type="Proteomes" id="UP000001311">
    <property type="component" value="Chromosome"/>
</dbReference>
<dbReference type="GO" id="GO:0005737">
    <property type="term" value="C:cytoplasm"/>
    <property type="evidence" value="ECO:0007669"/>
    <property type="project" value="UniProtKB-SubCell"/>
</dbReference>
<dbReference type="GO" id="GO:0005524">
    <property type="term" value="F:ATP binding"/>
    <property type="evidence" value="ECO:0007669"/>
    <property type="project" value="UniProtKB-UniRule"/>
</dbReference>
<dbReference type="GO" id="GO:0016887">
    <property type="term" value="F:ATP hydrolysis activity"/>
    <property type="evidence" value="ECO:0007669"/>
    <property type="project" value="InterPro"/>
</dbReference>
<dbReference type="GO" id="GO:0140662">
    <property type="term" value="F:ATP-dependent protein folding chaperone"/>
    <property type="evidence" value="ECO:0007669"/>
    <property type="project" value="InterPro"/>
</dbReference>
<dbReference type="GO" id="GO:0051082">
    <property type="term" value="F:unfolded protein binding"/>
    <property type="evidence" value="ECO:0007669"/>
    <property type="project" value="UniProtKB-UniRule"/>
</dbReference>
<dbReference type="CDD" id="cd16927">
    <property type="entry name" value="HATPase_Hsp90-like"/>
    <property type="match status" value="1"/>
</dbReference>
<dbReference type="FunFam" id="3.30.565.10:FF:000009">
    <property type="entry name" value="Molecular chaperone HtpG"/>
    <property type="match status" value="1"/>
</dbReference>
<dbReference type="Gene3D" id="3.30.230.80">
    <property type="match status" value="1"/>
</dbReference>
<dbReference type="Gene3D" id="3.40.50.11260">
    <property type="match status" value="1"/>
</dbReference>
<dbReference type="Gene3D" id="1.20.120.790">
    <property type="entry name" value="Heat shock protein 90, C-terminal domain"/>
    <property type="match status" value="1"/>
</dbReference>
<dbReference type="Gene3D" id="3.30.565.10">
    <property type="entry name" value="Histidine kinase-like ATPase, C-terminal domain"/>
    <property type="match status" value="1"/>
</dbReference>
<dbReference type="HAMAP" id="MF_00505">
    <property type="entry name" value="HSP90"/>
    <property type="match status" value="1"/>
</dbReference>
<dbReference type="InterPro" id="IPR036890">
    <property type="entry name" value="HATPase_C_sf"/>
</dbReference>
<dbReference type="InterPro" id="IPR019805">
    <property type="entry name" value="Heat_shock_protein_90_CS"/>
</dbReference>
<dbReference type="InterPro" id="IPR037196">
    <property type="entry name" value="HSP90_C"/>
</dbReference>
<dbReference type="InterPro" id="IPR001404">
    <property type="entry name" value="Hsp90_fam"/>
</dbReference>
<dbReference type="InterPro" id="IPR020575">
    <property type="entry name" value="Hsp90_N"/>
</dbReference>
<dbReference type="InterPro" id="IPR020568">
    <property type="entry name" value="Ribosomal_Su5_D2-typ_SF"/>
</dbReference>
<dbReference type="NCBIfam" id="NF003555">
    <property type="entry name" value="PRK05218.1"/>
    <property type="match status" value="1"/>
</dbReference>
<dbReference type="PANTHER" id="PTHR11528">
    <property type="entry name" value="HEAT SHOCK PROTEIN 90 FAMILY MEMBER"/>
    <property type="match status" value="1"/>
</dbReference>
<dbReference type="Pfam" id="PF13589">
    <property type="entry name" value="HATPase_c_3"/>
    <property type="match status" value="1"/>
</dbReference>
<dbReference type="Pfam" id="PF00183">
    <property type="entry name" value="HSP90"/>
    <property type="match status" value="1"/>
</dbReference>
<dbReference type="PIRSF" id="PIRSF002583">
    <property type="entry name" value="Hsp90"/>
    <property type="match status" value="1"/>
</dbReference>
<dbReference type="PRINTS" id="PR00775">
    <property type="entry name" value="HEATSHOCK90"/>
</dbReference>
<dbReference type="SMART" id="SM00387">
    <property type="entry name" value="HATPase_c"/>
    <property type="match status" value="1"/>
</dbReference>
<dbReference type="SUPFAM" id="SSF55874">
    <property type="entry name" value="ATPase domain of HSP90 chaperone/DNA topoisomerase II/histidine kinase"/>
    <property type="match status" value="1"/>
</dbReference>
<dbReference type="SUPFAM" id="SSF110942">
    <property type="entry name" value="HSP90 C-terminal domain"/>
    <property type="match status" value="1"/>
</dbReference>
<dbReference type="SUPFAM" id="SSF54211">
    <property type="entry name" value="Ribosomal protein S5 domain 2-like"/>
    <property type="match status" value="1"/>
</dbReference>
<dbReference type="PROSITE" id="PS00298">
    <property type="entry name" value="HSP90"/>
    <property type="match status" value="1"/>
</dbReference>
<comment type="function">
    <text evidence="1">Molecular chaperone. Has ATPase activity.</text>
</comment>
<comment type="subunit">
    <text evidence="1">Homodimer.</text>
</comment>
<comment type="subcellular location">
    <subcellularLocation>
        <location evidence="1">Cytoplasm</location>
    </subcellularLocation>
</comment>
<comment type="similarity">
    <text evidence="1">Belongs to the heat shock protein 90 family.</text>
</comment>
<proteinExistence type="inferred from homology"/>
<keyword id="KW-0067">ATP-binding</keyword>
<keyword id="KW-0143">Chaperone</keyword>
<keyword id="KW-0963">Cytoplasm</keyword>
<keyword id="KW-0547">Nucleotide-binding</keyword>
<keyword id="KW-0346">Stress response</keyword>
<name>HTPG_RICM5</name>
<sequence length="623" mass="70930">MIMTQEKKKFDAEVGKILNLMIHSLYSNKEIFMRELISNASDACDKLRYLSQSNSELVAGDSNFKITVKVDKDNGQIIIRDNGIGMNKDDLIENLGTIARSGTANFLKSLSGDSKKDNMLIGQFGVGFYSSFMVADKVTVTSRKAGEDKVHIWESDGLGEYTVSDSDKEFTRGTEIVLHIKKEEDTFLDHFRLKHIVKSYSDHIAVPIYFFDEAGNNEIQLNSASALWTRPKSEITEEQYKEFYKSLSYAVDDPWITMHNKNEGAIEFTNLLFIPSSKTFDLFHPDRKRRVKLYIKRVFISDENIDLIPSYLRFLRGVVDSEDLPLNISRESLQHNSVLEKIKNAITKRVLGELRKKKEESPEEYNKFWANFGGALKEGLCEATTDHEKLLEVCIFRSALHNKMISLDEYIANFKEGQSTIYYLSGDNPDKLLSSPQIEGLLSKEIDVLLFTDTVDDFWVNVNSKYKEHAIKSATRSDIDVEQTTSQSEEKNTDSKKSDDEYKLLTDYFKETLGELVKEVKISKKLTSSPACLAVSDAAMDIRMERFLIEQKQIANASAKNLELNPKNKIIEKIFNDLKANNKNNEELVNLIFDQACILEGEPVADTGAFSKRLNDIVQKAIL</sequence>